<feature type="chain" id="PRO_0000200799" description="Uncharacterized protein y4aK">
    <location>
        <begin position="1"/>
        <end position="50"/>
    </location>
</feature>
<geneLocation type="plasmid">
    <name>sym pNGR234a</name>
</geneLocation>
<proteinExistence type="predicted"/>
<gene>
    <name type="ordered locus">NGR_a00370</name>
    <name type="ORF">y4aK</name>
</gene>
<organism>
    <name type="scientific">Sinorhizobium fredii (strain NBRC 101917 / NGR234)</name>
    <dbReference type="NCBI Taxonomy" id="394"/>
    <lineage>
        <taxon>Bacteria</taxon>
        <taxon>Pseudomonadati</taxon>
        <taxon>Pseudomonadota</taxon>
        <taxon>Alphaproteobacteria</taxon>
        <taxon>Hyphomicrobiales</taxon>
        <taxon>Rhizobiaceae</taxon>
        <taxon>Sinorhizobium/Ensifer group</taxon>
        <taxon>Sinorhizobium</taxon>
    </lineage>
</organism>
<reference key="1">
    <citation type="journal article" date="1997" name="Nature">
        <title>Molecular basis of symbiosis between Rhizobium and legumes.</title>
        <authorList>
            <person name="Freiberg C.A."/>
            <person name="Fellay R."/>
            <person name="Bairoch A."/>
            <person name="Broughton W.J."/>
            <person name="Rosenthal A."/>
            <person name="Perret X."/>
        </authorList>
    </citation>
    <scope>NUCLEOTIDE SEQUENCE [LARGE SCALE GENOMIC DNA]</scope>
    <source>
        <strain>NBRC 101917 / NGR234</strain>
    </source>
</reference>
<reference key="2">
    <citation type="journal article" date="2009" name="Appl. Environ. Microbiol.">
        <title>Rhizobium sp. strain NGR234 possesses a remarkable number of secretion systems.</title>
        <authorList>
            <person name="Schmeisser C."/>
            <person name="Liesegang H."/>
            <person name="Krysciak D."/>
            <person name="Bakkou N."/>
            <person name="Le Quere A."/>
            <person name="Wollherr A."/>
            <person name="Heinemeyer I."/>
            <person name="Morgenstern B."/>
            <person name="Pommerening-Roeser A."/>
            <person name="Flores M."/>
            <person name="Palacios R."/>
            <person name="Brenner S."/>
            <person name="Gottschalk G."/>
            <person name="Schmitz R.A."/>
            <person name="Broughton W.J."/>
            <person name="Perret X."/>
            <person name="Strittmatter A.W."/>
            <person name="Streit W.R."/>
        </authorList>
    </citation>
    <scope>NUCLEOTIDE SEQUENCE [LARGE SCALE GENOMIC DNA]</scope>
    <source>
        <strain>NBRC 101917 / NGR234</strain>
    </source>
</reference>
<dbReference type="EMBL" id="U00090">
    <property type="protein sequence ID" value="AAB91608.1"/>
    <property type="molecule type" value="Genomic_DNA"/>
</dbReference>
<dbReference type="RefSeq" id="NP_443770.1">
    <property type="nucleotide sequence ID" value="NC_000914.2"/>
</dbReference>
<dbReference type="KEGG" id="rhi:NGR_a00370"/>
<dbReference type="PATRIC" id="fig|394.7.peg.35"/>
<dbReference type="HOGENOM" id="CLU_3121957_0_0_5"/>
<dbReference type="Proteomes" id="UP000001054">
    <property type="component" value="Plasmid pNGR234a"/>
</dbReference>
<name>Y4AK_SINFN</name>
<accession>P55358</accession>
<keyword id="KW-0614">Plasmid</keyword>
<keyword id="KW-1185">Reference proteome</keyword>
<sequence>MLVARLLRWALTVSLRLDPYGRKDEMAGAVGRFATKPVLQEAHARGRATA</sequence>
<protein>
    <recommendedName>
        <fullName>Uncharacterized protein y4aK</fullName>
    </recommendedName>
</protein>